<name>G3PA_SCEVA</name>
<feature type="chain" id="PRO_0000292345" description="Glyceraldehyde-3-phosphate dehydrogenase A, chloroplastic">
    <location>
        <begin position="1" status="less than"/>
        <end position="314" status="greater than"/>
    </location>
</feature>
<feature type="active site" description="Nucleophile" evidence="2">
    <location>
        <position position="148"/>
    </location>
</feature>
<feature type="binding site" evidence="1">
    <location>
        <begin position="5"/>
        <end position="6"/>
    </location>
    <ligand>
        <name>NADP(+)</name>
        <dbReference type="ChEBI" id="CHEBI:58349"/>
    </ligand>
</feature>
<feature type="binding site" evidence="1">
    <location>
        <position position="29"/>
    </location>
    <ligand>
        <name>NADP(+)</name>
        <dbReference type="ChEBI" id="CHEBI:58349"/>
    </ligand>
</feature>
<feature type="binding site" evidence="1">
    <location>
        <position position="74"/>
    </location>
    <ligand>
        <name>NADP(+)</name>
        <dbReference type="ChEBI" id="CHEBI:58349"/>
    </ligand>
</feature>
<feature type="binding site" evidence="1">
    <location>
        <begin position="147"/>
        <end position="149"/>
    </location>
    <ligand>
        <name>D-glyceraldehyde 3-phosphate</name>
        <dbReference type="ChEBI" id="CHEBI:59776"/>
    </ligand>
</feature>
<feature type="binding site" evidence="1">
    <location>
        <position position="178"/>
    </location>
    <ligand>
        <name>D-glyceraldehyde 3-phosphate</name>
        <dbReference type="ChEBI" id="CHEBI:59776"/>
    </ligand>
</feature>
<feature type="binding site" evidence="1">
    <location>
        <position position="193"/>
    </location>
    <ligand>
        <name>D-glyceraldehyde 3-phosphate</name>
        <dbReference type="ChEBI" id="CHEBI:59776"/>
    </ligand>
</feature>
<feature type="binding site" evidence="1">
    <location>
        <begin position="206"/>
        <end position="207"/>
    </location>
    <ligand>
        <name>D-glyceraldehyde 3-phosphate</name>
        <dbReference type="ChEBI" id="CHEBI:59776"/>
    </ligand>
</feature>
<feature type="binding site" evidence="1">
    <location>
        <position position="229"/>
    </location>
    <ligand>
        <name>D-glyceraldehyde 3-phosphate</name>
        <dbReference type="ChEBI" id="CHEBI:59776"/>
    </ligand>
</feature>
<feature type="binding site" evidence="1">
    <location>
        <position position="311"/>
    </location>
    <ligand>
        <name>NADP(+)</name>
        <dbReference type="ChEBI" id="CHEBI:58349"/>
    </ligand>
</feature>
<feature type="site" description="Activates thiol group during catalysis" evidence="1">
    <location>
        <position position="175"/>
    </location>
</feature>
<feature type="disulfide bond" evidence="1">
    <location>
        <begin position="13"/>
        <end position="283"/>
    </location>
</feature>
<feature type="non-terminal residue">
    <location>
        <position position="1"/>
    </location>
</feature>
<feature type="non-terminal residue">
    <location>
        <position position="314"/>
    </location>
</feature>
<sequence>NGFGRIGRNFLRCLETRQNSLLEVIAINDSGGVKQASHLLKYDSTLGKFDADVKIVDDGHISVNGKSIRVVSSRDPTKLPWGEMEIDLVIEGTGVFIDTPGASKHIEAGAKKVLITAPAKGSDIPTYVVGVNAHDYKHSDAIISNASCTTNCLAPFVKVLDEKFGIVKGTMTNTHSYTGDQRLLDASHRDLRRARAAALNIVPTTTGAAKAVALVLPKLKGKLNGIALRVPTPNVSVVDLVVQVEKKTFAEEINNAFKEAAAGSLNGVLAVSDEPLVSVDFRCTDVSSTIDSSLTMVMGADMVKVVAWYDNEWG</sequence>
<reference key="1">
    <citation type="journal article" date="2005" name="Planta">
        <title>Sugar-mediated transcriptional regulation of the Gap gene system and concerted photosystem II functional modulation in the microalga Scenedesmus vacuolatus.</title>
        <authorList>
            <person name="Valverde F."/>
            <person name="Ortega J.M."/>
            <person name="Losada M."/>
            <person name="Serrano A."/>
        </authorList>
    </citation>
    <scope>NUCLEOTIDE SEQUENCE [MRNA]</scope>
    <scope>INDUCTION</scope>
    <source>
        <strain>SAG 211-8b</strain>
    </source>
</reference>
<comment type="catalytic activity">
    <reaction>
        <text>D-glyceraldehyde 3-phosphate + phosphate + NADP(+) = (2R)-3-phospho-glyceroyl phosphate + NADPH + H(+)</text>
        <dbReference type="Rhea" id="RHEA:10296"/>
        <dbReference type="ChEBI" id="CHEBI:15378"/>
        <dbReference type="ChEBI" id="CHEBI:43474"/>
        <dbReference type="ChEBI" id="CHEBI:57604"/>
        <dbReference type="ChEBI" id="CHEBI:57783"/>
        <dbReference type="ChEBI" id="CHEBI:58349"/>
        <dbReference type="ChEBI" id="CHEBI:59776"/>
        <dbReference type="EC" id="1.2.1.13"/>
    </reaction>
</comment>
<comment type="pathway">
    <text>Carbohydrate biosynthesis; Calvin cycle.</text>
</comment>
<comment type="subunit">
    <text evidence="1">Homotetramer.</text>
</comment>
<comment type="subcellular location">
    <subcellularLocation>
        <location evidence="1">Plastid</location>
        <location evidence="1">Chloroplast</location>
    </subcellularLocation>
</comment>
<comment type="induction">
    <text evidence="3">Repressed by addition of D-galactose, D-mannose, D-glucose, D-ribose or sucrose, but not by the addition of non-metabolizable sugar analogs.</text>
</comment>
<comment type="miscellaneous">
    <text>GAPDHB, the second subunit found in plants, is absent in algae.</text>
</comment>
<comment type="miscellaneous">
    <text>Algae contain three forms of GAPDH: two cytosolic forms which participate in glycolysis and one chloroplastic form which participates in photosynthesis. These three forms are encoded by distinct genes.</text>
</comment>
<comment type="similarity">
    <text evidence="4">Belongs to the glyceraldehyde-3-phosphate dehydrogenase family.</text>
</comment>
<accession>Q8VXQ9</accession>
<gene>
    <name type="primary">GapA</name>
</gene>
<protein>
    <recommendedName>
        <fullName>Glyceraldehyde-3-phosphate dehydrogenase A, chloroplastic</fullName>
        <ecNumber>1.2.1.13</ecNumber>
    </recommendedName>
    <alternativeName>
        <fullName>NADP-dependent glyceraldehydephosphate dehydrogenase A</fullName>
        <shortName>GAPDHA</shortName>
    </alternativeName>
</protein>
<organism>
    <name type="scientific">Scenedesmus vacuolatus</name>
    <name type="common">Green alga</name>
    <name type="synonym">Coelastrella vacuolata</name>
    <dbReference type="NCBI Taxonomy" id="77546"/>
    <lineage>
        <taxon>Eukaryota</taxon>
        <taxon>Viridiplantae</taxon>
        <taxon>Chlorophyta</taxon>
        <taxon>core chlorophytes</taxon>
        <taxon>Chlorophyceae</taxon>
        <taxon>CS clade</taxon>
        <taxon>Sphaeropleales</taxon>
        <taxon>Scenedesmaceae</taxon>
        <taxon>Scenedesmus</taxon>
    </lineage>
</organism>
<evidence type="ECO:0000250" key="1"/>
<evidence type="ECO:0000255" key="2">
    <source>
        <dbReference type="PROSITE-ProRule" id="PRU10009"/>
    </source>
</evidence>
<evidence type="ECO:0000269" key="3">
    <source>
    </source>
</evidence>
<evidence type="ECO:0000305" key="4"/>
<proteinExistence type="evidence at transcript level"/>
<dbReference type="EC" id="1.2.1.13"/>
<dbReference type="EMBL" id="AJ252208">
    <property type="protein sequence ID" value="CAC81011.1"/>
    <property type="molecule type" value="mRNA"/>
</dbReference>
<dbReference type="SMR" id="Q8VXQ9"/>
<dbReference type="UniPathway" id="UPA00116"/>
<dbReference type="GO" id="GO:0009507">
    <property type="term" value="C:chloroplast"/>
    <property type="evidence" value="ECO:0007669"/>
    <property type="project" value="UniProtKB-SubCell"/>
</dbReference>
<dbReference type="GO" id="GO:0047100">
    <property type="term" value="F:glyceraldehyde-3-phosphate dehydrogenase (NADP+) (phosphorylating) activity"/>
    <property type="evidence" value="ECO:0007669"/>
    <property type="project" value="UniProtKB-EC"/>
</dbReference>
<dbReference type="GO" id="GO:0051287">
    <property type="term" value="F:NAD binding"/>
    <property type="evidence" value="ECO:0007669"/>
    <property type="project" value="InterPro"/>
</dbReference>
<dbReference type="GO" id="GO:0050661">
    <property type="term" value="F:NADP binding"/>
    <property type="evidence" value="ECO:0007669"/>
    <property type="project" value="InterPro"/>
</dbReference>
<dbReference type="GO" id="GO:0006006">
    <property type="term" value="P:glucose metabolic process"/>
    <property type="evidence" value="ECO:0007669"/>
    <property type="project" value="InterPro"/>
</dbReference>
<dbReference type="GO" id="GO:0019253">
    <property type="term" value="P:reductive pentose-phosphate cycle"/>
    <property type="evidence" value="ECO:0007669"/>
    <property type="project" value="UniProtKB-UniPathway"/>
</dbReference>
<dbReference type="CDD" id="cd18126">
    <property type="entry name" value="GAPDH_I_C"/>
    <property type="match status" value="1"/>
</dbReference>
<dbReference type="CDD" id="cd05214">
    <property type="entry name" value="GAPDH_I_N"/>
    <property type="match status" value="1"/>
</dbReference>
<dbReference type="FunFam" id="3.30.360.10:FF:000002">
    <property type="entry name" value="Glyceraldehyde-3-phosphate dehydrogenase"/>
    <property type="match status" value="1"/>
</dbReference>
<dbReference type="FunFam" id="3.40.50.720:FF:000001">
    <property type="entry name" value="Glyceraldehyde-3-phosphate dehydrogenase"/>
    <property type="match status" value="1"/>
</dbReference>
<dbReference type="Gene3D" id="3.30.360.10">
    <property type="entry name" value="Dihydrodipicolinate Reductase, domain 2"/>
    <property type="match status" value="1"/>
</dbReference>
<dbReference type="Gene3D" id="3.40.50.720">
    <property type="entry name" value="NAD(P)-binding Rossmann-like Domain"/>
    <property type="match status" value="1"/>
</dbReference>
<dbReference type="InterPro" id="IPR020831">
    <property type="entry name" value="GlycerAld/Erythrose_P_DH"/>
</dbReference>
<dbReference type="InterPro" id="IPR020830">
    <property type="entry name" value="GlycerAld_3-P_DH_AS"/>
</dbReference>
<dbReference type="InterPro" id="IPR020829">
    <property type="entry name" value="GlycerAld_3-P_DH_cat"/>
</dbReference>
<dbReference type="InterPro" id="IPR020828">
    <property type="entry name" value="GlycerAld_3-P_DH_NAD(P)-bd"/>
</dbReference>
<dbReference type="InterPro" id="IPR006424">
    <property type="entry name" value="Glyceraldehyde-3-P_DH_1"/>
</dbReference>
<dbReference type="InterPro" id="IPR036291">
    <property type="entry name" value="NAD(P)-bd_dom_sf"/>
</dbReference>
<dbReference type="NCBIfam" id="TIGR01534">
    <property type="entry name" value="GAPDH-I"/>
    <property type="match status" value="1"/>
</dbReference>
<dbReference type="PANTHER" id="PTHR43148">
    <property type="entry name" value="GLYCERALDEHYDE-3-PHOSPHATE DEHYDROGENASE 2"/>
    <property type="match status" value="1"/>
</dbReference>
<dbReference type="Pfam" id="PF02800">
    <property type="entry name" value="Gp_dh_C"/>
    <property type="match status" value="1"/>
</dbReference>
<dbReference type="Pfam" id="PF00044">
    <property type="entry name" value="Gp_dh_N"/>
    <property type="match status" value="1"/>
</dbReference>
<dbReference type="PIRSF" id="PIRSF000149">
    <property type="entry name" value="GAP_DH"/>
    <property type="match status" value="1"/>
</dbReference>
<dbReference type="PRINTS" id="PR00078">
    <property type="entry name" value="G3PDHDRGNASE"/>
</dbReference>
<dbReference type="SMART" id="SM00846">
    <property type="entry name" value="Gp_dh_N"/>
    <property type="match status" value="1"/>
</dbReference>
<dbReference type="SUPFAM" id="SSF55347">
    <property type="entry name" value="Glyceraldehyde-3-phosphate dehydrogenase-like, C-terminal domain"/>
    <property type="match status" value="1"/>
</dbReference>
<dbReference type="SUPFAM" id="SSF51735">
    <property type="entry name" value="NAD(P)-binding Rossmann-fold domains"/>
    <property type="match status" value="1"/>
</dbReference>
<dbReference type="PROSITE" id="PS00071">
    <property type="entry name" value="GAPDH"/>
    <property type="match status" value="1"/>
</dbReference>
<keyword id="KW-0113">Calvin cycle</keyword>
<keyword id="KW-0150">Chloroplast</keyword>
<keyword id="KW-1015">Disulfide bond</keyword>
<keyword id="KW-0521">NADP</keyword>
<keyword id="KW-0560">Oxidoreductase</keyword>
<keyword id="KW-0934">Plastid</keyword>